<feature type="chain" id="PRO_0000142157" description="Imidazole glycerol phosphate synthase subunit HisF">
    <location>
        <begin position="1"/>
        <end position="258"/>
    </location>
</feature>
<feature type="active site" evidence="2">
    <location>
        <position position="11"/>
    </location>
</feature>
<feature type="active site" evidence="2">
    <location>
        <position position="130"/>
    </location>
</feature>
<dbReference type="EC" id="4.3.2.10"/>
<dbReference type="EMBL" id="AB008676">
    <property type="protein sequence ID" value="BAA77740.1"/>
    <property type="molecule type" value="Genomic_DNA"/>
</dbReference>
<dbReference type="EMBL" id="AE005174">
    <property type="protein sequence ID" value="AAG57084.1"/>
    <property type="molecule type" value="Genomic_DNA"/>
</dbReference>
<dbReference type="EMBL" id="BA000007">
    <property type="protein sequence ID" value="BAB36249.1"/>
    <property type="molecule type" value="Genomic_DNA"/>
</dbReference>
<dbReference type="PIR" id="B90982">
    <property type="entry name" value="B90982"/>
</dbReference>
<dbReference type="PIR" id="H85827">
    <property type="entry name" value="H85827"/>
</dbReference>
<dbReference type="RefSeq" id="NP_310853.1">
    <property type="nucleotide sequence ID" value="NC_002695.1"/>
</dbReference>
<dbReference type="RefSeq" id="WP_000880182.1">
    <property type="nucleotide sequence ID" value="NZ_VOAI01000013.1"/>
</dbReference>
<dbReference type="SMR" id="P60665"/>
<dbReference type="STRING" id="155864.Z3187"/>
<dbReference type="GeneID" id="86946979"/>
<dbReference type="GeneID" id="914652"/>
<dbReference type="KEGG" id="ece:Z3187"/>
<dbReference type="KEGG" id="ecs:ECs_2826"/>
<dbReference type="PATRIC" id="fig|386585.9.peg.2961"/>
<dbReference type="eggNOG" id="COG0107">
    <property type="taxonomic scope" value="Bacteria"/>
</dbReference>
<dbReference type="HOGENOM" id="CLU_048577_4_0_6"/>
<dbReference type="OMA" id="WEVYIHG"/>
<dbReference type="UniPathway" id="UPA00031">
    <property type="reaction ID" value="UER00010"/>
</dbReference>
<dbReference type="Proteomes" id="UP000000558">
    <property type="component" value="Chromosome"/>
</dbReference>
<dbReference type="Proteomes" id="UP000002519">
    <property type="component" value="Chromosome"/>
</dbReference>
<dbReference type="GO" id="GO:0005737">
    <property type="term" value="C:cytoplasm"/>
    <property type="evidence" value="ECO:0007669"/>
    <property type="project" value="UniProtKB-SubCell"/>
</dbReference>
<dbReference type="GO" id="GO:0000107">
    <property type="term" value="F:imidazoleglycerol-phosphate synthase activity"/>
    <property type="evidence" value="ECO:0007669"/>
    <property type="project" value="UniProtKB-UniRule"/>
</dbReference>
<dbReference type="GO" id="GO:0016829">
    <property type="term" value="F:lyase activity"/>
    <property type="evidence" value="ECO:0007669"/>
    <property type="project" value="UniProtKB-KW"/>
</dbReference>
<dbReference type="GO" id="GO:0000105">
    <property type="term" value="P:L-histidine biosynthetic process"/>
    <property type="evidence" value="ECO:0007669"/>
    <property type="project" value="UniProtKB-UniRule"/>
</dbReference>
<dbReference type="CDD" id="cd04731">
    <property type="entry name" value="HisF"/>
    <property type="match status" value="1"/>
</dbReference>
<dbReference type="FunFam" id="3.20.20.70:FF:000006">
    <property type="entry name" value="Imidazole glycerol phosphate synthase subunit HisF"/>
    <property type="match status" value="1"/>
</dbReference>
<dbReference type="Gene3D" id="3.20.20.70">
    <property type="entry name" value="Aldolase class I"/>
    <property type="match status" value="1"/>
</dbReference>
<dbReference type="HAMAP" id="MF_01013">
    <property type="entry name" value="HisF"/>
    <property type="match status" value="1"/>
</dbReference>
<dbReference type="InterPro" id="IPR013785">
    <property type="entry name" value="Aldolase_TIM"/>
</dbReference>
<dbReference type="InterPro" id="IPR006062">
    <property type="entry name" value="His_biosynth"/>
</dbReference>
<dbReference type="InterPro" id="IPR004651">
    <property type="entry name" value="HisF"/>
</dbReference>
<dbReference type="InterPro" id="IPR050064">
    <property type="entry name" value="IGPS_HisA/HisF"/>
</dbReference>
<dbReference type="InterPro" id="IPR011060">
    <property type="entry name" value="RibuloseP-bd_barrel"/>
</dbReference>
<dbReference type="NCBIfam" id="TIGR00735">
    <property type="entry name" value="hisF"/>
    <property type="match status" value="1"/>
</dbReference>
<dbReference type="PANTHER" id="PTHR21235:SF2">
    <property type="entry name" value="IMIDAZOLE GLYCEROL PHOSPHATE SYNTHASE HISHF"/>
    <property type="match status" value="1"/>
</dbReference>
<dbReference type="PANTHER" id="PTHR21235">
    <property type="entry name" value="IMIDAZOLE GLYCEROL PHOSPHATE SYNTHASE SUBUNIT HISF/H IGP SYNTHASE SUBUNIT HISF/H"/>
    <property type="match status" value="1"/>
</dbReference>
<dbReference type="Pfam" id="PF00977">
    <property type="entry name" value="His_biosynth"/>
    <property type="match status" value="1"/>
</dbReference>
<dbReference type="SUPFAM" id="SSF51366">
    <property type="entry name" value="Ribulose-phoshate binding barrel"/>
    <property type="match status" value="1"/>
</dbReference>
<evidence type="ECO:0000250" key="1"/>
<evidence type="ECO:0000255" key="2"/>
<evidence type="ECO:0000305" key="3"/>
<name>HIS6_ECO57</name>
<reference key="1">
    <citation type="journal article" date="1999" name="Microb. Pathog.">
        <title>Analysis of the genes responsible for the O-antigen synthesis in enterohaemorrhagic Escherichia coli O157.</title>
        <authorList>
            <person name="Shimizu T."/>
            <person name="Yamasaki S."/>
            <person name="Tsukamoto T."/>
            <person name="Takeda Y."/>
        </authorList>
    </citation>
    <scope>NUCLEOTIDE SEQUENCE [GENOMIC DNA]</scope>
    <source>
        <strain>O157:H- / 184 / EHEC</strain>
    </source>
</reference>
<reference key="2">
    <citation type="journal article" date="2001" name="Nature">
        <title>Genome sequence of enterohaemorrhagic Escherichia coli O157:H7.</title>
        <authorList>
            <person name="Perna N.T."/>
            <person name="Plunkett G. III"/>
            <person name="Burland V."/>
            <person name="Mau B."/>
            <person name="Glasner J.D."/>
            <person name="Rose D.J."/>
            <person name="Mayhew G.F."/>
            <person name="Evans P.S."/>
            <person name="Gregor J."/>
            <person name="Kirkpatrick H.A."/>
            <person name="Posfai G."/>
            <person name="Hackett J."/>
            <person name="Klink S."/>
            <person name="Boutin A."/>
            <person name="Shao Y."/>
            <person name="Miller L."/>
            <person name="Grotbeck E.J."/>
            <person name="Davis N.W."/>
            <person name="Lim A."/>
            <person name="Dimalanta E.T."/>
            <person name="Potamousis K."/>
            <person name="Apodaca J."/>
            <person name="Anantharaman T.S."/>
            <person name="Lin J."/>
            <person name="Yen G."/>
            <person name="Schwartz D.C."/>
            <person name="Welch R.A."/>
            <person name="Blattner F.R."/>
        </authorList>
    </citation>
    <scope>NUCLEOTIDE SEQUENCE [LARGE SCALE GENOMIC DNA]</scope>
    <source>
        <strain>O157:H7 / EDL933 / ATCC 700927 / EHEC</strain>
    </source>
</reference>
<reference key="3">
    <citation type="journal article" date="2001" name="DNA Res.">
        <title>Complete genome sequence of enterohemorrhagic Escherichia coli O157:H7 and genomic comparison with a laboratory strain K-12.</title>
        <authorList>
            <person name="Hayashi T."/>
            <person name="Makino K."/>
            <person name="Ohnishi M."/>
            <person name="Kurokawa K."/>
            <person name="Ishii K."/>
            <person name="Yokoyama K."/>
            <person name="Han C.-G."/>
            <person name="Ohtsubo E."/>
            <person name="Nakayama K."/>
            <person name="Murata T."/>
            <person name="Tanaka M."/>
            <person name="Tobe T."/>
            <person name="Iida T."/>
            <person name="Takami H."/>
            <person name="Honda T."/>
            <person name="Sasakawa C."/>
            <person name="Ogasawara N."/>
            <person name="Yasunaga T."/>
            <person name="Kuhara S."/>
            <person name="Shiba T."/>
            <person name="Hattori M."/>
            <person name="Shinagawa H."/>
        </authorList>
    </citation>
    <scope>NUCLEOTIDE SEQUENCE [LARGE SCALE GENOMIC DNA]</scope>
    <source>
        <strain>O157:H7 / Sakai / RIMD 0509952 / EHEC</strain>
    </source>
</reference>
<keyword id="KW-0028">Amino-acid biosynthesis</keyword>
<keyword id="KW-0963">Cytoplasm</keyword>
<keyword id="KW-0368">Histidine biosynthesis</keyword>
<keyword id="KW-0456">Lyase</keyword>
<keyword id="KW-1185">Reference proteome</keyword>
<sequence length="258" mass="28454">MLAKRIIPCLDVRDGQVVKGVQFRNHEIIGDIVPLAKRYAEEGADELVFYDITASSDGRVVDKSWVSRVAEVIDIPFCVAGGIKSLEDAAKILSFGADKISINSPALADPTLITRLADRFGVQCIVVGIDTWYDAETGKYHVNQYTGDESRTRVTQWETLDWVQEVQKRGAGEIVLNMMNQDGVRNGYDLEQLKKVREVCHVPLIASGGAGTMEHFLEAFRDADVDGALAASVFHKQIINIGELKAYLATQGVEIRIC</sequence>
<gene>
    <name type="primary">hisF</name>
    <name type="ordered locus">Z3187</name>
    <name type="ordered locus">ECs2826</name>
</gene>
<comment type="function">
    <text evidence="1">IGPS catalyzes the conversion of PRFAR and glutamine to IGP, AICAR and glutamate. The HisF subunit catalyzes the cyclization activity that produces IGP and AICAR from PRFAR using the ammonia provided by the HisH subunit (By similarity).</text>
</comment>
<comment type="catalytic activity">
    <reaction>
        <text>5-[(5-phospho-1-deoxy-D-ribulos-1-ylimino)methylamino]-1-(5-phospho-beta-D-ribosyl)imidazole-4-carboxamide + L-glutamine = D-erythro-1-(imidazol-4-yl)glycerol 3-phosphate + 5-amino-1-(5-phospho-beta-D-ribosyl)imidazole-4-carboxamide + L-glutamate + H(+)</text>
        <dbReference type="Rhea" id="RHEA:24793"/>
        <dbReference type="ChEBI" id="CHEBI:15378"/>
        <dbReference type="ChEBI" id="CHEBI:29985"/>
        <dbReference type="ChEBI" id="CHEBI:58278"/>
        <dbReference type="ChEBI" id="CHEBI:58359"/>
        <dbReference type="ChEBI" id="CHEBI:58475"/>
        <dbReference type="ChEBI" id="CHEBI:58525"/>
        <dbReference type="EC" id="4.3.2.10"/>
    </reaction>
</comment>
<comment type="pathway">
    <text>Amino-acid biosynthesis; L-histidine biosynthesis; L-histidine from 5-phospho-alpha-D-ribose 1-diphosphate: step 5/9.</text>
</comment>
<comment type="subunit">
    <text evidence="1">Heterodimer of HisH and HisF.</text>
</comment>
<comment type="subcellular location">
    <subcellularLocation>
        <location evidence="1">Cytoplasm</location>
    </subcellularLocation>
</comment>
<comment type="similarity">
    <text evidence="3">Belongs to the HisA/HisF family.</text>
</comment>
<accession>P60665</accession>
<accession>P10373</accession>
<proteinExistence type="inferred from homology"/>
<protein>
    <recommendedName>
        <fullName>Imidazole glycerol phosphate synthase subunit HisF</fullName>
        <ecNumber>4.3.2.10</ecNumber>
    </recommendedName>
    <alternativeName>
        <fullName>IGP synthase cyclase subunit</fullName>
    </alternativeName>
    <alternativeName>
        <fullName>IGP synthase subunit HisF</fullName>
    </alternativeName>
    <alternativeName>
        <fullName>ImGP synthase subunit HisF</fullName>
        <shortName>IGPS subunit HisF</shortName>
    </alternativeName>
</protein>
<organism>
    <name type="scientific">Escherichia coli O157:H7</name>
    <dbReference type="NCBI Taxonomy" id="83334"/>
    <lineage>
        <taxon>Bacteria</taxon>
        <taxon>Pseudomonadati</taxon>
        <taxon>Pseudomonadota</taxon>
        <taxon>Gammaproteobacteria</taxon>
        <taxon>Enterobacterales</taxon>
        <taxon>Enterobacteriaceae</taxon>
        <taxon>Escherichia</taxon>
    </lineage>
</organism>